<organism>
    <name type="scientific">Burkholderia cenocepacia (strain HI2424)</name>
    <dbReference type="NCBI Taxonomy" id="331272"/>
    <lineage>
        <taxon>Bacteria</taxon>
        <taxon>Pseudomonadati</taxon>
        <taxon>Pseudomonadota</taxon>
        <taxon>Betaproteobacteria</taxon>
        <taxon>Burkholderiales</taxon>
        <taxon>Burkholderiaceae</taxon>
        <taxon>Burkholderia</taxon>
        <taxon>Burkholderia cepacia complex</taxon>
    </lineage>
</organism>
<gene>
    <name evidence="1" type="primary">ugpC</name>
    <name type="ordered locus">Bcen2424_0398</name>
</gene>
<dbReference type="EC" id="7.6.2.10" evidence="1"/>
<dbReference type="EMBL" id="CP000458">
    <property type="protein sequence ID" value="ABK07152.1"/>
    <property type="molecule type" value="Genomic_DNA"/>
</dbReference>
<dbReference type="RefSeq" id="WP_011546625.1">
    <property type="nucleotide sequence ID" value="NC_008542.1"/>
</dbReference>
<dbReference type="SMR" id="A0K3S5"/>
<dbReference type="KEGG" id="bch:Bcen2424_0398"/>
<dbReference type="HOGENOM" id="CLU_000604_1_1_4"/>
<dbReference type="GO" id="GO:0055052">
    <property type="term" value="C:ATP-binding cassette (ABC) transporter complex, substrate-binding subunit-containing"/>
    <property type="evidence" value="ECO:0007669"/>
    <property type="project" value="TreeGrafter"/>
</dbReference>
<dbReference type="GO" id="GO:0015430">
    <property type="term" value="F:ABC-type glycerol-3-phosphate transporter activity"/>
    <property type="evidence" value="ECO:0007669"/>
    <property type="project" value="UniProtKB-EC"/>
</dbReference>
<dbReference type="GO" id="GO:0005524">
    <property type="term" value="F:ATP binding"/>
    <property type="evidence" value="ECO:0007669"/>
    <property type="project" value="UniProtKB-KW"/>
</dbReference>
<dbReference type="GO" id="GO:0016887">
    <property type="term" value="F:ATP hydrolysis activity"/>
    <property type="evidence" value="ECO:0007669"/>
    <property type="project" value="InterPro"/>
</dbReference>
<dbReference type="GO" id="GO:0008643">
    <property type="term" value="P:carbohydrate transport"/>
    <property type="evidence" value="ECO:0007669"/>
    <property type="project" value="InterPro"/>
</dbReference>
<dbReference type="GO" id="GO:0001407">
    <property type="term" value="P:glycerophosphodiester transmembrane transport"/>
    <property type="evidence" value="ECO:0007669"/>
    <property type="project" value="TreeGrafter"/>
</dbReference>
<dbReference type="CDD" id="cd03301">
    <property type="entry name" value="ABC_MalK_N"/>
    <property type="match status" value="1"/>
</dbReference>
<dbReference type="FunFam" id="3.40.50.300:FF:000042">
    <property type="entry name" value="Maltose/maltodextrin ABC transporter, ATP-binding protein"/>
    <property type="match status" value="1"/>
</dbReference>
<dbReference type="Gene3D" id="2.40.50.100">
    <property type="match status" value="1"/>
</dbReference>
<dbReference type="Gene3D" id="2.40.50.140">
    <property type="entry name" value="Nucleic acid-binding proteins"/>
    <property type="match status" value="1"/>
</dbReference>
<dbReference type="Gene3D" id="3.40.50.300">
    <property type="entry name" value="P-loop containing nucleotide triphosphate hydrolases"/>
    <property type="match status" value="1"/>
</dbReference>
<dbReference type="InterPro" id="IPR003593">
    <property type="entry name" value="AAA+_ATPase"/>
</dbReference>
<dbReference type="InterPro" id="IPR003439">
    <property type="entry name" value="ABC_transporter-like_ATP-bd"/>
</dbReference>
<dbReference type="InterPro" id="IPR017871">
    <property type="entry name" value="ABC_transporter-like_CS"/>
</dbReference>
<dbReference type="InterPro" id="IPR015855">
    <property type="entry name" value="ABC_transpr_MalK-like"/>
</dbReference>
<dbReference type="InterPro" id="IPR047641">
    <property type="entry name" value="ABC_transpr_MalK/UgpC-like"/>
</dbReference>
<dbReference type="InterPro" id="IPR008995">
    <property type="entry name" value="Mo/tungstate-bd_C_term_dom"/>
</dbReference>
<dbReference type="InterPro" id="IPR012340">
    <property type="entry name" value="NA-bd_OB-fold"/>
</dbReference>
<dbReference type="InterPro" id="IPR040582">
    <property type="entry name" value="OB_MalK-like"/>
</dbReference>
<dbReference type="InterPro" id="IPR027417">
    <property type="entry name" value="P-loop_NTPase"/>
</dbReference>
<dbReference type="NCBIfam" id="NF008653">
    <property type="entry name" value="PRK11650.1"/>
    <property type="match status" value="1"/>
</dbReference>
<dbReference type="PANTHER" id="PTHR43875">
    <property type="entry name" value="MALTODEXTRIN IMPORT ATP-BINDING PROTEIN MSMX"/>
    <property type="match status" value="1"/>
</dbReference>
<dbReference type="PANTHER" id="PTHR43875:SF12">
    <property type="entry name" value="SN-GLYCEROL-3-PHOSPHATE IMPORT ATP-BINDING PROTEIN UGPC"/>
    <property type="match status" value="1"/>
</dbReference>
<dbReference type="Pfam" id="PF00005">
    <property type="entry name" value="ABC_tran"/>
    <property type="match status" value="1"/>
</dbReference>
<dbReference type="Pfam" id="PF17912">
    <property type="entry name" value="OB_MalK"/>
    <property type="match status" value="1"/>
</dbReference>
<dbReference type="SMART" id="SM00382">
    <property type="entry name" value="AAA"/>
    <property type="match status" value="1"/>
</dbReference>
<dbReference type="SUPFAM" id="SSF50331">
    <property type="entry name" value="MOP-like"/>
    <property type="match status" value="1"/>
</dbReference>
<dbReference type="SUPFAM" id="SSF52540">
    <property type="entry name" value="P-loop containing nucleoside triphosphate hydrolases"/>
    <property type="match status" value="1"/>
</dbReference>
<dbReference type="PROSITE" id="PS00211">
    <property type="entry name" value="ABC_TRANSPORTER_1"/>
    <property type="match status" value="1"/>
</dbReference>
<dbReference type="PROSITE" id="PS50893">
    <property type="entry name" value="ABC_TRANSPORTER_2"/>
    <property type="match status" value="1"/>
</dbReference>
<dbReference type="PROSITE" id="PS51315">
    <property type="entry name" value="UGPC"/>
    <property type="match status" value="1"/>
</dbReference>
<accession>A0K3S5</accession>
<comment type="function">
    <text evidence="1">Part of the ABC transporter complex UgpBAEC involved in sn-glycerol-3-phosphate (G3P) import. Responsible for energy coupling to the transport system.</text>
</comment>
<comment type="catalytic activity">
    <reaction evidence="1">
        <text>sn-glycerol 3-phosphate(out) + ATP + H2O = sn-glycerol 3-phosphate(in) + ADP + phosphate + H(+)</text>
        <dbReference type="Rhea" id="RHEA:21668"/>
        <dbReference type="ChEBI" id="CHEBI:15377"/>
        <dbReference type="ChEBI" id="CHEBI:15378"/>
        <dbReference type="ChEBI" id="CHEBI:30616"/>
        <dbReference type="ChEBI" id="CHEBI:43474"/>
        <dbReference type="ChEBI" id="CHEBI:57597"/>
        <dbReference type="ChEBI" id="CHEBI:456216"/>
        <dbReference type="EC" id="7.6.2.10"/>
    </reaction>
</comment>
<comment type="subunit">
    <text evidence="1">The complex is composed of two ATP-binding proteins (UgpC), two transmembrane proteins (UgpA and UgpE) and a solute-binding protein (UgpB).</text>
</comment>
<comment type="subcellular location">
    <subcellularLocation>
        <location evidence="1">Cell inner membrane</location>
        <topology evidence="1">Peripheral membrane protein</topology>
    </subcellularLocation>
</comment>
<comment type="similarity">
    <text evidence="1">Belongs to the ABC transporter superfamily. sn-glycerol-3-phosphate importer (TC 3.A.1.1.3) family.</text>
</comment>
<evidence type="ECO:0000255" key="1">
    <source>
        <dbReference type="HAMAP-Rule" id="MF_01727"/>
    </source>
</evidence>
<sequence>MAALSLKGVRKSYDGKQHVLHGIDVEIADGEFIVLVGPSGCGKSTLLRMIAGLESVTDGEIAIGDRVVNTLEPKDRDIAMVFQNYALYPHMTVAQNMGYGLKIRGIERATIDSRVAAAAKILELEPLLARRPRELSGGQRQRVAMGRAIVREPSVFLFDEPLSNLDAKLRVQMRLEIQRLHARLATTSVYVTHDQIEAMTLAQRVIVMNRGYAEQIGAPVDVYEKPATVFVAGFIGSPAMNLMHGRLSEDGASFTVAGGGPALPVAGAPGIGREIATGRDWVLGVRPEHMTPQPGVAQATLPVDSCELLGADNLAHGRWGDHDIAVRLPHADRPARGTALAAALPAHRLHFFDPESGKRAG</sequence>
<keyword id="KW-0067">ATP-binding</keyword>
<keyword id="KW-0997">Cell inner membrane</keyword>
<keyword id="KW-1003">Cell membrane</keyword>
<keyword id="KW-0472">Membrane</keyword>
<keyword id="KW-0547">Nucleotide-binding</keyword>
<keyword id="KW-0762">Sugar transport</keyword>
<keyword id="KW-1278">Translocase</keyword>
<keyword id="KW-0813">Transport</keyword>
<feature type="chain" id="PRO_0000289739" description="sn-glycerol-3-phosphate import ATP-binding protein UgpC">
    <location>
        <begin position="1"/>
        <end position="361"/>
    </location>
</feature>
<feature type="domain" description="ABC transporter" evidence="1">
    <location>
        <begin position="4"/>
        <end position="235"/>
    </location>
</feature>
<feature type="binding site" evidence="1">
    <location>
        <begin position="37"/>
        <end position="44"/>
    </location>
    <ligand>
        <name>ATP</name>
        <dbReference type="ChEBI" id="CHEBI:30616"/>
    </ligand>
</feature>
<proteinExistence type="inferred from homology"/>
<protein>
    <recommendedName>
        <fullName evidence="1">sn-glycerol-3-phosphate import ATP-binding protein UgpC</fullName>
        <ecNumber evidence="1">7.6.2.10</ecNumber>
    </recommendedName>
</protein>
<name>UGPC_BURCH</name>
<reference key="1">
    <citation type="submission" date="2006-08" db="EMBL/GenBank/DDBJ databases">
        <title>Complete sequence of chromosome 1 of Burkholderia cenocepacia HI2424.</title>
        <authorList>
            <person name="Copeland A."/>
            <person name="Lucas S."/>
            <person name="Lapidus A."/>
            <person name="Barry K."/>
            <person name="Detter J.C."/>
            <person name="Glavina del Rio T."/>
            <person name="Hammon N."/>
            <person name="Israni S."/>
            <person name="Pitluck S."/>
            <person name="Chain P."/>
            <person name="Malfatti S."/>
            <person name="Shin M."/>
            <person name="Vergez L."/>
            <person name="Schmutz J."/>
            <person name="Larimer F."/>
            <person name="Land M."/>
            <person name="Hauser L."/>
            <person name="Kyrpides N."/>
            <person name="Kim E."/>
            <person name="LiPuma J.J."/>
            <person name="Gonzalez C.F."/>
            <person name="Konstantinidis K."/>
            <person name="Tiedje J.M."/>
            <person name="Richardson P."/>
        </authorList>
    </citation>
    <scope>NUCLEOTIDE SEQUENCE [LARGE SCALE GENOMIC DNA]</scope>
    <source>
        <strain>HI2424</strain>
    </source>
</reference>